<gene>
    <name evidence="1" type="primary">rsmG</name>
    <name type="ordered locus">SCH_3786</name>
</gene>
<protein>
    <recommendedName>
        <fullName evidence="1">Ribosomal RNA small subunit methyltransferase G</fullName>
        <ecNumber evidence="1">2.1.1.170</ecNumber>
    </recommendedName>
    <alternativeName>
        <fullName evidence="1">16S rRNA 7-methylguanosine methyltransferase</fullName>
        <shortName evidence="1">16S rRNA m7G methyltransferase</shortName>
    </alternativeName>
</protein>
<accession>Q57HX0</accession>
<keyword id="KW-0963">Cytoplasm</keyword>
<keyword id="KW-0489">Methyltransferase</keyword>
<keyword id="KW-0698">rRNA processing</keyword>
<keyword id="KW-0949">S-adenosyl-L-methionine</keyword>
<keyword id="KW-0808">Transferase</keyword>
<evidence type="ECO:0000255" key="1">
    <source>
        <dbReference type="HAMAP-Rule" id="MF_00074"/>
    </source>
</evidence>
<reference key="1">
    <citation type="journal article" date="2005" name="Nucleic Acids Res.">
        <title>The genome sequence of Salmonella enterica serovar Choleraesuis, a highly invasive and resistant zoonotic pathogen.</title>
        <authorList>
            <person name="Chiu C.-H."/>
            <person name="Tang P."/>
            <person name="Chu C."/>
            <person name="Hu S."/>
            <person name="Bao Q."/>
            <person name="Yu J."/>
            <person name="Chou Y.-Y."/>
            <person name="Wang H.-S."/>
            <person name="Lee Y.-S."/>
        </authorList>
    </citation>
    <scope>NUCLEOTIDE SEQUENCE [LARGE SCALE GENOMIC DNA]</scope>
    <source>
        <strain>SC-B67</strain>
    </source>
</reference>
<feature type="chain" id="PRO_0000184321" description="Ribosomal RNA small subunit methyltransferase G">
    <location>
        <begin position="1"/>
        <end position="207"/>
    </location>
</feature>
<feature type="binding site" evidence="1">
    <location>
        <position position="73"/>
    </location>
    <ligand>
        <name>S-adenosyl-L-methionine</name>
        <dbReference type="ChEBI" id="CHEBI:59789"/>
    </ligand>
</feature>
<feature type="binding site" evidence="1">
    <location>
        <position position="78"/>
    </location>
    <ligand>
        <name>S-adenosyl-L-methionine</name>
        <dbReference type="ChEBI" id="CHEBI:59789"/>
    </ligand>
</feature>
<feature type="binding site" evidence="1">
    <location>
        <begin position="124"/>
        <end position="125"/>
    </location>
    <ligand>
        <name>S-adenosyl-L-methionine</name>
        <dbReference type="ChEBI" id="CHEBI:59789"/>
    </ligand>
</feature>
<feature type="binding site" evidence="1">
    <location>
        <position position="139"/>
    </location>
    <ligand>
        <name>S-adenosyl-L-methionine</name>
        <dbReference type="ChEBI" id="CHEBI:59789"/>
    </ligand>
</feature>
<proteinExistence type="inferred from homology"/>
<name>RSMG_SALCH</name>
<dbReference type="EC" id="2.1.1.170" evidence="1"/>
<dbReference type="EMBL" id="AE017220">
    <property type="protein sequence ID" value="AAX67692.1"/>
    <property type="molecule type" value="Genomic_DNA"/>
</dbReference>
<dbReference type="RefSeq" id="WP_001519938.1">
    <property type="nucleotide sequence ID" value="NC_006905.1"/>
</dbReference>
<dbReference type="SMR" id="Q57HX0"/>
<dbReference type="KEGG" id="sec:SCH_3786"/>
<dbReference type="HOGENOM" id="CLU_065341_2_2_6"/>
<dbReference type="Proteomes" id="UP000000538">
    <property type="component" value="Chromosome"/>
</dbReference>
<dbReference type="GO" id="GO:0005829">
    <property type="term" value="C:cytosol"/>
    <property type="evidence" value="ECO:0007669"/>
    <property type="project" value="TreeGrafter"/>
</dbReference>
<dbReference type="GO" id="GO:0070043">
    <property type="term" value="F:rRNA (guanine-N7-)-methyltransferase activity"/>
    <property type="evidence" value="ECO:0007669"/>
    <property type="project" value="UniProtKB-UniRule"/>
</dbReference>
<dbReference type="CDD" id="cd02440">
    <property type="entry name" value="AdoMet_MTases"/>
    <property type="match status" value="1"/>
</dbReference>
<dbReference type="FunFam" id="3.40.50.150:FF:000032">
    <property type="entry name" value="Ribosomal RNA small subunit methyltransferase G"/>
    <property type="match status" value="1"/>
</dbReference>
<dbReference type="Gene3D" id="3.40.50.150">
    <property type="entry name" value="Vaccinia Virus protein VP39"/>
    <property type="match status" value="1"/>
</dbReference>
<dbReference type="HAMAP" id="MF_00074">
    <property type="entry name" value="16SrRNA_methyltr_G"/>
    <property type="match status" value="1"/>
</dbReference>
<dbReference type="InterPro" id="IPR003682">
    <property type="entry name" value="rRNA_ssu_MeTfrase_G"/>
</dbReference>
<dbReference type="InterPro" id="IPR029063">
    <property type="entry name" value="SAM-dependent_MTases_sf"/>
</dbReference>
<dbReference type="NCBIfam" id="TIGR00138">
    <property type="entry name" value="rsmG_gidB"/>
    <property type="match status" value="1"/>
</dbReference>
<dbReference type="PANTHER" id="PTHR31760">
    <property type="entry name" value="S-ADENOSYL-L-METHIONINE-DEPENDENT METHYLTRANSFERASES SUPERFAMILY PROTEIN"/>
    <property type="match status" value="1"/>
</dbReference>
<dbReference type="PANTHER" id="PTHR31760:SF0">
    <property type="entry name" value="S-ADENOSYL-L-METHIONINE-DEPENDENT METHYLTRANSFERASES SUPERFAMILY PROTEIN"/>
    <property type="match status" value="1"/>
</dbReference>
<dbReference type="Pfam" id="PF02527">
    <property type="entry name" value="GidB"/>
    <property type="match status" value="1"/>
</dbReference>
<dbReference type="PIRSF" id="PIRSF003078">
    <property type="entry name" value="GidB"/>
    <property type="match status" value="1"/>
</dbReference>
<dbReference type="SUPFAM" id="SSF53335">
    <property type="entry name" value="S-adenosyl-L-methionine-dependent methyltransferases"/>
    <property type="match status" value="1"/>
</dbReference>
<comment type="function">
    <text evidence="1">Specifically methylates the N7 position of guanine in position 527 of 16S rRNA.</text>
</comment>
<comment type="catalytic activity">
    <reaction evidence="1">
        <text>guanosine(527) in 16S rRNA + S-adenosyl-L-methionine = N(7)-methylguanosine(527) in 16S rRNA + S-adenosyl-L-homocysteine</text>
        <dbReference type="Rhea" id="RHEA:42732"/>
        <dbReference type="Rhea" id="RHEA-COMP:10209"/>
        <dbReference type="Rhea" id="RHEA-COMP:10210"/>
        <dbReference type="ChEBI" id="CHEBI:57856"/>
        <dbReference type="ChEBI" id="CHEBI:59789"/>
        <dbReference type="ChEBI" id="CHEBI:74269"/>
        <dbReference type="ChEBI" id="CHEBI:74480"/>
        <dbReference type="EC" id="2.1.1.170"/>
    </reaction>
</comment>
<comment type="subcellular location">
    <subcellularLocation>
        <location evidence="1">Cytoplasm</location>
    </subcellularLocation>
</comment>
<comment type="similarity">
    <text evidence="1">Belongs to the methyltransferase superfamily. RNA methyltransferase RsmG family.</text>
</comment>
<sequence>MLNKLSRLLADAGISLTDHQKTLLVAYVDMLHKWNKAYNLTSVRDPNEMLVRHILDSIVVAPYLQGQRFIDVGTGPGLPGIPLAIVLPDAHFTLLDSLGKRVRFLRQVQHELKLENITPVQSRVEAYPSEPPFDGVISRAFASLNDMVSWCHHLPGEKGRFYALKGQLPGDEIASLPDNFSVESVEKLRVPQLEGERHLVIIKSNKV</sequence>
<organism>
    <name type="scientific">Salmonella choleraesuis (strain SC-B67)</name>
    <dbReference type="NCBI Taxonomy" id="321314"/>
    <lineage>
        <taxon>Bacteria</taxon>
        <taxon>Pseudomonadati</taxon>
        <taxon>Pseudomonadota</taxon>
        <taxon>Gammaproteobacteria</taxon>
        <taxon>Enterobacterales</taxon>
        <taxon>Enterobacteriaceae</taxon>
        <taxon>Salmonella</taxon>
    </lineage>
</organism>